<protein>
    <recommendedName>
        <fullName evidence="5">Delta(12) acyl-lipid conjugase (11E,13E-forming)</fullName>
        <shortName evidence="4">ImpFadX</shortName>
        <ecNumber evidence="3">1.14.19.33</ecNumber>
    </recommendedName>
</protein>
<feature type="chain" id="PRO_0000434407" description="Delta(12) acyl-lipid conjugase (11E,13E-forming)">
    <location>
        <begin position="1"/>
        <end position="383"/>
    </location>
</feature>
<feature type="transmembrane region" description="Helical" evidence="1">
    <location>
        <begin position="56"/>
        <end position="76"/>
    </location>
</feature>
<feature type="transmembrane region" description="Helical" evidence="1">
    <location>
        <begin position="84"/>
        <end position="104"/>
    </location>
</feature>
<feature type="transmembrane region" description="Helical" evidence="1">
    <location>
        <begin position="179"/>
        <end position="199"/>
    </location>
</feature>
<feature type="transmembrane region" description="Helical" evidence="1">
    <location>
        <begin position="225"/>
        <end position="245"/>
    </location>
</feature>
<feature type="transmembrane region" description="Helical" evidence="1">
    <location>
        <begin position="249"/>
        <end position="269"/>
    </location>
</feature>
<feature type="region of interest" description="Disordered" evidence="2">
    <location>
        <begin position="1"/>
        <end position="30"/>
    </location>
</feature>
<feature type="short sequence motif" description="Histidine box-1" evidence="5">
    <location>
        <begin position="105"/>
        <end position="109"/>
    </location>
</feature>
<feature type="short sequence motif" description="Histidine box-2" evidence="5">
    <location>
        <begin position="141"/>
        <end position="145"/>
    </location>
</feature>
<feature type="short sequence motif" description="Histidine box-3" evidence="5">
    <location>
        <begin position="315"/>
        <end position="319"/>
    </location>
</feature>
<feature type="compositionally biased region" description="Basic and acidic residues" evidence="2">
    <location>
        <begin position="12"/>
        <end position="26"/>
    </location>
</feature>
<keyword id="KW-0275">Fatty acid biosynthesis</keyword>
<keyword id="KW-0276">Fatty acid metabolism</keyword>
<keyword id="KW-0444">Lipid biosynthesis</keyword>
<keyword id="KW-0443">Lipid metabolism</keyword>
<keyword id="KW-0472">Membrane</keyword>
<keyword id="KW-0560">Oxidoreductase</keyword>
<keyword id="KW-0812">Transmembrane</keyword>
<keyword id="KW-1133">Transmembrane helix</keyword>
<organism evidence="6">
    <name type="scientific">Impatiens balsamina</name>
    <name type="common">Balsam</name>
    <dbReference type="NCBI Taxonomy" id="63779"/>
    <lineage>
        <taxon>Eukaryota</taxon>
        <taxon>Viridiplantae</taxon>
        <taxon>Streptophyta</taxon>
        <taxon>Embryophyta</taxon>
        <taxon>Tracheophyta</taxon>
        <taxon>Spermatophyta</taxon>
        <taxon>Magnoliopsida</taxon>
        <taxon>eudicotyledons</taxon>
        <taxon>Gunneridae</taxon>
        <taxon>Pentapetalae</taxon>
        <taxon>asterids</taxon>
        <taxon>Ericales</taxon>
        <taxon>Balsaminaceae</taxon>
        <taxon>Impatiens</taxon>
        <taxon>Impatiens subgen. Impatiens</taxon>
        <taxon>Impatiens sect. Uniflorae</taxon>
    </lineage>
</organism>
<evidence type="ECO:0000255" key="1"/>
<evidence type="ECO:0000256" key="2">
    <source>
        <dbReference type="SAM" id="MobiDB-lite"/>
    </source>
</evidence>
<evidence type="ECO:0000269" key="3">
    <source>
    </source>
</evidence>
<evidence type="ECO:0000303" key="4">
    <source>
    </source>
</evidence>
<evidence type="ECO:0000305" key="5"/>
<evidence type="ECO:0000312" key="6">
    <source>
        <dbReference type="EMBL" id="AAF05915.1"/>
    </source>
</evidence>
<reference key="1">
    <citation type="journal article" date="1999" name="Proc. Natl. Acad. Sci. U.S.A.">
        <title>Biosynthetic origin of conjugated double bonds: production of fatty acid components of high-value drying oils in transgenic soybean embryos.</title>
        <authorList>
            <person name="Cahoon E.B."/>
            <person name="Carlson T.J."/>
            <person name="Ripp K.G."/>
            <person name="Schweiger B.J."/>
            <person name="Cook G.A."/>
            <person name="Hall S.E."/>
            <person name="Kinney A.J."/>
        </authorList>
    </citation>
    <scope>NUCLEOTIDE SEQUENCE [MRNA]</scope>
    <scope>TISSUE SPECIFICITY</scope>
    <scope>FUNCTION</scope>
    <scope>CATALYTIC ACTIVITY</scope>
</reference>
<proteinExistence type="evidence at protein level"/>
<sequence length="383" mass="44743">MGEVGPTNRTKTKLDKQQESENRVPHEPPPFTLSDLKKAIPPHCFERSLVKSFYHVIHDIIILSFFYYVAANYIPMLPQNLRYVAWPIYWAIQGCVQLGILVLGHECGHHAFSDYQWVDDMVGFVLHSSQLIPYFSWKHSHRRHHSNTASIERDEVYPPAYKNDLPWFAKYLRNPVGRFLMIFGALLFGWPSYLLFNANGRLYDRFASHYDPQSPIFNNRERLQVIASDVGLVFAYFVLYKIALAKGFVWLICVYGVPYVILNGLIVLITFLQHTHPNLPRYDLSEWDWLRGALSTVDRDYGMLNKVFHNVTDTHLVHHLFTTMPHYRAKEATEVIKPILGDYYKFDDTPFLKALWKDMGKCIYVESDVPGKNKGVYWYNNDI</sequence>
<accession>Q9SP62</accession>
<gene>
    <name evidence="4" type="primary">FADX</name>
</gene>
<comment type="function">
    <text evidence="3">Converts linoleic acid to alpha-eleostearic acid (18:3(9Z,11E,13E)) and alpha-linolenic acid to alpha-parinaric acid (18:4(9Z,11E, 13E, 15Z)). Converts a single cis double bond at carbon 12 to two conjugated trans bonds at positions 11 and 13.</text>
</comment>
<comment type="catalytic activity">
    <reaction evidence="3">
        <text>a (9Z,12Z)-octadecadienoyl-containing glycerolipid + 2 Fe(II)-[cytochrome b5] + O2 + 2 H(+) = a (9Z,11E,13E)-octadecatrienoyl-containing glycerolipid + 2 Fe(III)-[cytochrome b5] + 2 H2O</text>
        <dbReference type="Rhea" id="RHEA:46368"/>
        <dbReference type="Rhea" id="RHEA-COMP:10438"/>
        <dbReference type="Rhea" id="RHEA-COMP:10439"/>
        <dbReference type="ChEBI" id="CHEBI:15377"/>
        <dbReference type="ChEBI" id="CHEBI:15378"/>
        <dbReference type="ChEBI" id="CHEBI:15379"/>
        <dbReference type="ChEBI" id="CHEBI:29033"/>
        <dbReference type="ChEBI" id="CHEBI:29034"/>
        <dbReference type="ChEBI" id="CHEBI:88254"/>
        <dbReference type="ChEBI" id="CHEBI:88351"/>
        <dbReference type="EC" id="1.14.19.33"/>
    </reaction>
</comment>
<comment type="catalytic activity">
    <reaction evidence="3">
        <text>(9Z,12Z,15Z)-octadecatrienoyl-containing glycerolipid + 2 Fe(II)-[cytochrome b5] + O2 + 2 H(+) = a (9Z,11E,13E,15Z)-octadecatetraenoyl-containing glycerolipid + 2 Fe(III)-[cytochrome b5] + 2 H2O</text>
        <dbReference type="Rhea" id="RHEA:46372"/>
        <dbReference type="Rhea" id="RHEA-COMP:10438"/>
        <dbReference type="Rhea" id="RHEA-COMP:10439"/>
        <dbReference type="ChEBI" id="CHEBI:15377"/>
        <dbReference type="ChEBI" id="CHEBI:15378"/>
        <dbReference type="ChEBI" id="CHEBI:15379"/>
        <dbReference type="ChEBI" id="CHEBI:29033"/>
        <dbReference type="ChEBI" id="CHEBI:29034"/>
        <dbReference type="ChEBI" id="CHEBI:88251"/>
        <dbReference type="ChEBI" id="CHEBI:90078"/>
        <dbReference type="EC" id="1.14.19.33"/>
    </reaction>
</comment>
<comment type="pathway">
    <text>Lipid metabolism; polyunsaturated fatty acid biosynthesis.</text>
</comment>
<comment type="subcellular location">
    <subcellularLocation>
        <location evidence="1">Membrane</location>
        <topology evidence="1">Multi-pass membrane protein</topology>
    </subcellularLocation>
</comment>
<comment type="tissue specificity">
    <text evidence="3">Expressed in developing seeds, but not in leaves.</text>
</comment>
<comment type="domain">
    <text evidence="5">The histidine box domains may contain the active site and/or be involved in metal ion binding.</text>
</comment>
<comment type="similarity">
    <text evidence="5">Belongs to the fatty acid desaturase type 1 family.</text>
</comment>
<dbReference type="EC" id="1.14.19.33" evidence="3"/>
<dbReference type="EMBL" id="AF182520">
    <property type="protein sequence ID" value="AAF05915.1"/>
    <property type="molecule type" value="mRNA"/>
</dbReference>
<dbReference type="SMR" id="Q9SP62"/>
<dbReference type="BRENDA" id="1.14.19.33">
    <property type="organism ID" value="14021"/>
</dbReference>
<dbReference type="UniPathway" id="UPA00658"/>
<dbReference type="GO" id="GO:0016020">
    <property type="term" value="C:membrane"/>
    <property type="evidence" value="ECO:0007669"/>
    <property type="project" value="UniProtKB-SubCell"/>
</dbReference>
<dbReference type="GO" id="GO:0016717">
    <property type="term" value="F:oxidoreductase activity, acting on paired donors, with oxidation of a pair of donors resulting in the reduction of molecular oxygen to two molecules of water"/>
    <property type="evidence" value="ECO:0007669"/>
    <property type="project" value="InterPro"/>
</dbReference>
<dbReference type="GO" id="GO:0006636">
    <property type="term" value="P:unsaturated fatty acid biosynthetic process"/>
    <property type="evidence" value="ECO:0007669"/>
    <property type="project" value="UniProtKB-UniPathway"/>
</dbReference>
<dbReference type="CDD" id="cd03507">
    <property type="entry name" value="Delta12-FADS-like"/>
    <property type="match status" value="1"/>
</dbReference>
<dbReference type="InterPro" id="IPR005804">
    <property type="entry name" value="FA_desaturase_dom"/>
</dbReference>
<dbReference type="InterPro" id="IPR021863">
    <property type="entry name" value="FAS_N"/>
</dbReference>
<dbReference type="InterPro" id="IPR012171">
    <property type="entry name" value="Fatty_acid_desaturase"/>
</dbReference>
<dbReference type="PANTHER" id="PTHR32100">
    <property type="entry name" value="OMEGA-6 FATTY ACID DESATURASE, CHLOROPLASTIC"/>
    <property type="match status" value="1"/>
</dbReference>
<dbReference type="Pfam" id="PF11960">
    <property type="entry name" value="DUF3474"/>
    <property type="match status" value="1"/>
</dbReference>
<dbReference type="Pfam" id="PF00487">
    <property type="entry name" value="FA_desaturase"/>
    <property type="match status" value="1"/>
</dbReference>
<name>FADX_IMPBA</name>